<name>NUOD_HYDCU</name>
<dbReference type="EC" id="7.1.1.-" evidence="1"/>
<dbReference type="EMBL" id="CP000109">
    <property type="protein sequence ID" value="ABB41416.1"/>
    <property type="molecule type" value="Genomic_DNA"/>
</dbReference>
<dbReference type="SMR" id="Q31HF7"/>
<dbReference type="STRING" id="317025.Tcr_0820"/>
<dbReference type="KEGG" id="tcx:Tcr_0820"/>
<dbReference type="eggNOG" id="COG0649">
    <property type="taxonomic scope" value="Bacteria"/>
</dbReference>
<dbReference type="HOGENOM" id="CLU_015134_1_1_6"/>
<dbReference type="OrthoDB" id="9801496at2"/>
<dbReference type="GO" id="GO:0005886">
    <property type="term" value="C:plasma membrane"/>
    <property type="evidence" value="ECO:0007669"/>
    <property type="project" value="UniProtKB-SubCell"/>
</dbReference>
<dbReference type="GO" id="GO:0051287">
    <property type="term" value="F:NAD binding"/>
    <property type="evidence" value="ECO:0007669"/>
    <property type="project" value="InterPro"/>
</dbReference>
<dbReference type="GO" id="GO:0050136">
    <property type="term" value="F:NADH:ubiquinone reductase (non-electrogenic) activity"/>
    <property type="evidence" value="ECO:0007669"/>
    <property type="project" value="UniProtKB-UniRule"/>
</dbReference>
<dbReference type="GO" id="GO:0048038">
    <property type="term" value="F:quinone binding"/>
    <property type="evidence" value="ECO:0007669"/>
    <property type="project" value="UniProtKB-KW"/>
</dbReference>
<dbReference type="FunFam" id="1.10.645.10:FF:000005">
    <property type="entry name" value="NADH-quinone oxidoreductase subunit D"/>
    <property type="match status" value="1"/>
</dbReference>
<dbReference type="Gene3D" id="1.10.645.10">
    <property type="entry name" value="Cytochrome-c3 Hydrogenase, chain B"/>
    <property type="match status" value="1"/>
</dbReference>
<dbReference type="HAMAP" id="MF_01358">
    <property type="entry name" value="NDH1_NuoD"/>
    <property type="match status" value="1"/>
</dbReference>
<dbReference type="InterPro" id="IPR001135">
    <property type="entry name" value="NADH_Q_OxRdtase_suD"/>
</dbReference>
<dbReference type="InterPro" id="IPR014029">
    <property type="entry name" value="NADH_UbQ_OxRdtase_49kDa_CS"/>
</dbReference>
<dbReference type="InterPro" id="IPR022885">
    <property type="entry name" value="NDH1_su_D/H"/>
</dbReference>
<dbReference type="InterPro" id="IPR029014">
    <property type="entry name" value="NiFe-Hase_large"/>
</dbReference>
<dbReference type="NCBIfam" id="TIGR01962">
    <property type="entry name" value="NuoD"/>
    <property type="match status" value="1"/>
</dbReference>
<dbReference type="NCBIfam" id="NF004739">
    <property type="entry name" value="PRK06075.1"/>
    <property type="match status" value="1"/>
</dbReference>
<dbReference type="PANTHER" id="PTHR11993:SF10">
    <property type="entry name" value="NADH DEHYDROGENASE [UBIQUINONE] IRON-SULFUR PROTEIN 2, MITOCHONDRIAL"/>
    <property type="match status" value="1"/>
</dbReference>
<dbReference type="PANTHER" id="PTHR11993">
    <property type="entry name" value="NADH-UBIQUINONE OXIDOREDUCTASE 49 KDA SUBUNIT"/>
    <property type="match status" value="1"/>
</dbReference>
<dbReference type="Pfam" id="PF00346">
    <property type="entry name" value="Complex1_49kDa"/>
    <property type="match status" value="1"/>
</dbReference>
<dbReference type="SUPFAM" id="SSF56762">
    <property type="entry name" value="HydB/Nqo4-like"/>
    <property type="match status" value="1"/>
</dbReference>
<dbReference type="PROSITE" id="PS00535">
    <property type="entry name" value="COMPLEX1_49K"/>
    <property type="match status" value="1"/>
</dbReference>
<feature type="chain" id="PRO_0000357950" description="NADH-quinone oxidoreductase subunit D">
    <location>
        <begin position="1"/>
        <end position="417"/>
    </location>
</feature>
<comment type="function">
    <text evidence="1">NDH-1 shuttles electrons from NADH, via FMN and iron-sulfur (Fe-S) centers, to quinones in the respiratory chain. The immediate electron acceptor for the enzyme in this species is believed to be ubiquinone. Couples the redox reaction to proton translocation (for every two electrons transferred, four hydrogen ions are translocated across the cytoplasmic membrane), and thus conserves the redox energy in a proton gradient.</text>
</comment>
<comment type="catalytic activity">
    <reaction evidence="1">
        <text>a quinone + NADH + 5 H(+)(in) = a quinol + NAD(+) + 4 H(+)(out)</text>
        <dbReference type="Rhea" id="RHEA:57888"/>
        <dbReference type="ChEBI" id="CHEBI:15378"/>
        <dbReference type="ChEBI" id="CHEBI:24646"/>
        <dbReference type="ChEBI" id="CHEBI:57540"/>
        <dbReference type="ChEBI" id="CHEBI:57945"/>
        <dbReference type="ChEBI" id="CHEBI:132124"/>
    </reaction>
</comment>
<comment type="subunit">
    <text evidence="1">NDH-1 is composed of 14 different subunits. Subunits NuoB, C, D, E, F, and G constitute the peripheral sector of the complex.</text>
</comment>
<comment type="subcellular location">
    <subcellularLocation>
        <location evidence="1">Cell inner membrane</location>
        <topology evidence="1">Peripheral membrane protein</topology>
        <orientation evidence="1">Cytoplasmic side</orientation>
    </subcellularLocation>
</comment>
<comment type="similarity">
    <text evidence="1">Belongs to the complex I 49 kDa subunit family.</text>
</comment>
<sequence length="417" mass="47631">MSEIRNYTLNFGPQHPSAHGVLRLVLELDGETIVRSDPHIGLLHRGTEKLAEYKPFNQSIGYMDRLDYVSMMANEHAYVMGIEKMLGIEVPERAQYIRVMFDEITRILNHLMWLGAHALDIGAMTVFLYAFREREDLMDCYEAVSGARMHATYYRPGGVYRDLPDTMAKYEESKWHSGKKLDQLNETREGSLLDFIEAFTERFPGYVDEYETLLTDNRIWKQRTVDIGIVSPERALQLGFTGPMLRGSGIAWDLRKKQPYEVYDKLDFDIPVGATGDCYDRYLVRVAEMRESNKIIKQCVKWLKENPGPVISDDHKVTPPSREDAKSNMEALIHHFKLFTEGYSVPEGESYTAVEHPKGEFGIYMVSDGANKPYRLKVRAPGFAHLASLDEMAKGHMIADVVAIIGTQDIVFGEVDR</sequence>
<protein>
    <recommendedName>
        <fullName evidence="1">NADH-quinone oxidoreductase subunit D</fullName>
        <ecNumber evidence="1">7.1.1.-</ecNumber>
    </recommendedName>
    <alternativeName>
        <fullName evidence="1">NADH dehydrogenase I subunit D</fullName>
    </alternativeName>
    <alternativeName>
        <fullName evidence="1">NDH-1 subunit D</fullName>
    </alternativeName>
</protein>
<reference key="1">
    <citation type="journal article" date="2006" name="PLoS Biol.">
        <title>The genome of deep-sea vent chemolithoautotroph Thiomicrospira crunogena XCL-2.</title>
        <authorList>
            <person name="Scott K.M."/>
            <person name="Sievert S.M."/>
            <person name="Abril F.N."/>
            <person name="Ball L.A."/>
            <person name="Barrett C.J."/>
            <person name="Blake R.A."/>
            <person name="Boller A.J."/>
            <person name="Chain P.S.G."/>
            <person name="Clark J.A."/>
            <person name="Davis C.R."/>
            <person name="Detter C."/>
            <person name="Do K.F."/>
            <person name="Dobrinski K.P."/>
            <person name="Faza B.I."/>
            <person name="Fitzpatrick K.A."/>
            <person name="Freyermuth S.K."/>
            <person name="Harmer T.L."/>
            <person name="Hauser L.J."/>
            <person name="Huegler M."/>
            <person name="Kerfeld C.A."/>
            <person name="Klotz M.G."/>
            <person name="Kong W.W."/>
            <person name="Land M."/>
            <person name="Lapidus A."/>
            <person name="Larimer F.W."/>
            <person name="Longo D.L."/>
            <person name="Lucas S."/>
            <person name="Malfatti S.A."/>
            <person name="Massey S.E."/>
            <person name="Martin D.D."/>
            <person name="McCuddin Z."/>
            <person name="Meyer F."/>
            <person name="Moore J.L."/>
            <person name="Ocampo L.H. Jr."/>
            <person name="Paul J.H."/>
            <person name="Paulsen I.T."/>
            <person name="Reep D.K."/>
            <person name="Ren Q."/>
            <person name="Ross R.L."/>
            <person name="Sato P.Y."/>
            <person name="Thomas P."/>
            <person name="Tinkham L.E."/>
            <person name="Zeruth G.T."/>
        </authorList>
    </citation>
    <scope>NUCLEOTIDE SEQUENCE [LARGE SCALE GENOMIC DNA]</scope>
    <source>
        <strain>DSM 25203 / XCL-2</strain>
    </source>
</reference>
<evidence type="ECO:0000255" key="1">
    <source>
        <dbReference type="HAMAP-Rule" id="MF_01358"/>
    </source>
</evidence>
<keyword id="KW-0997">Cell inner membrane</keyword>
<keyword id="KW-1003">Cell membrane</keyword>
<keyword id="KW-0472">Membrane</keyword>
<keyword id="KW-0520">NAD</keyword>
<keyword id="KW-0874">Quinone</keyword>
<keyword id="KW-1278">Translocase</keyword>
<keyword id="KW-0813">Transport</keyword>
<keyword id="KW-0830">Ubiquinone</keyword>
<accession>Q31HF7</accession>
<gene>
    <name evidence="1" type="primary">nuoD</name>
    <name type="ordered locus">Tcr_0820</name>
</gene>
<proteinExistence type="inferred from homology"/>
<organism>
    <name type="scientific">Hydrogenovibrio crunogenus (strain DSM 25203 / XCL-2)</name>
    <name type="common">Thiomicrospira crunogena</name>
    <dbReference type="NCBI Taxonomy" id="317025"/>
    <lineage>
        <taxon>Bacteria</taxon>
        <taxon>Pseudomonadati</taxon>
        <taxon>Pseudomonadota</taxon>
        <taxon>Gammaproteobacteria</taxon>
        <taxon>Thiotrichales</taxon>
        <taxon>Piscirickettsiaceae</taxon>
        <taxon>Hydrogenovibrio</taxon>
    </lineage>
</organism>